<reference key="1">
    <citation type="journal article" date="1996" name="Cell">
        <title>Pathway leading to correctly folded beta-tubulin.</title>
        <authorList>
            <person name="Tian G."/>
            <person name="Huang Y."/>
            <person name="Rommelaere H."/>
            <person name="Vandekerckhove J."/>
            <person name="Ampe C."/>
            <person name="Cowan N.J."/>
        </authorList>
    </citation>
    <scope>NUCLEOTIDE SEQUENCE [MRNA]</scope>
    <scope>VARIANT ALA-65</scope>
</reference>
<reference key="2">
    <citation type="submission" date="2003-05" db="EMBL/GenBank/DDBJ databases">
        <title>Cloning of human full-length CDSs in BD Creator(TM) system donor vector.</title>
        <authorList>
            <person name="Kalnine N."/>
            <person name="Chen X."/>
            <person name="Rolfs A."/>
            <person name="Halleck A."/>
            <person name="Hines L."/>
            <person name="Eisenstein S."/>
            <person name="Koundinya M."/>
            <person name="Raphael J."/>
            <person name="Moreira D."/>
            <person name="Kelley T."/>
            <person name="LaBaer J."/>
            <person name="Lin Y."/>
            <person name="Phelan M."/>
            <person name="Farmer A."/>
        </authorList>
    </citation>
    <scope>NUCLEOTIDE SEQUENCE [LARGE SCALE MRNA]</scope>
    <scope>VARIANT ALA-65</scope>
</reference>
<reference key="3">
    <citation type="journal article" date="2004" name="Nat. Genet.">
        <title>Complete sequencing and characterization of 21,243 full-length human cDNAs.</title>
        <authorList>
            <person name="Ota T."/>
            <person name="Suzuki Y."/>
            <person name="Nishikawa T."/>
            <person name="Otsuki T."/>
            <person name="Sugiyama T."/>
            <person name="Irie R."/>
            <person name="Wakamatsu A."/>
            <person name="Hayashi K."/>
            <person name="Sato H."/>
            <person name="Nagai K."/>
            <person name="Kimura K."/>
            <person name="Makita H."/>
            <person name="Sekine M."/>
            <person name="Obayashi M."/>
            <person name="Nishi T."/>
            <person name="Shibahara T."/>
            <person name="Tanaka T."/>
            <person name="Ishii S."/>
            <person name="Yamamoto J."/>
            <person name="Saito K."/>
            <person name="Kawai Y."/>
            <person name="Isono Y."/>
            <person name="Nakamura Y."/>
            <person name="Nagahari K."/>
            <person name="Murakami K."/>
            <person name="Yasuda T."/>
            <person name="Iwayanagi T."/>
            <person name="Wagatsuma M."/>
            <person name="Shiratori A."/>
            <person name="Sudo H."/>
            <person name="Hosoiri T."/>
            <person name="Kaku Y."/>
            <person name="Kodaira H."/>
            <person name="Kondo H."/>
            <person name="Sugawara M."/>
            <person name="Takahashi M."/>
            <person name="Kanda K."/>
            <person name="Yokoi T."/>
            <person name="Furuya T."/>
            <person name="Kikkawa E."/>
            <person name="Omura Y."/>
            <person name="Abe K."/>
            <person name="Kamihara K."/>
            <person name="Katsuta N."/>
            <person name="Sato K."/>
            <person name="Tanikawa M."/>
            <person name="Yamazaki M."/>
            <person name="Ninomiya K."/>
            <person name="Ishibashi T."/>
            <person name="Yamashita H."/>
            <person name="Murakawa K."/>
            <person name="Fujimori K."/>
            <person name="Tanai H."/>
            <person name="Kimata M."/>
            <person name="Watanabe M."/>
            <person name="Hiraoka S."/>
            <person name="Chiba Y."/>
            <person name="Ishida S."/>
            <person name="Ono Y."/>
            <person name="Takiguchi S."/>
            <person name="Watanabe S."/>
            <person name="Yosida M."/>
            <person name="Hotuta T."/>
            <person name="Kusano J."/>
            <person name="Kanehori K."/>
            <person name="Takahashi-Fujii A."/>
            <person name="Hara H."/>
            <person name="Tanase T.-O."/>
            <person name="Nomura Y."/>
            <person name="Togiya S."/>
            <person name="Komai F."/>
            <person name="Hara R."/>
            <person name="Takeuchi K."/>
            <person name="Arita M."/>
            <person name="Imose N."/>
            <person name="Musashino K."/>
            <person name="Yuuki H."/>
            <person name="Oshima A."/>
            <person name="Sasaki N."/>
            <person name="Aotsuka S."/>
            <person name="Yoshikawa Y."/>
            <person name="Matsunawa H."/>
            <person name="Ichihara T."/>
            <person name="Shiohata N."/>
            <person name="Sano S."/>
            <person name="Moriya S."/>
            <person name="Momiyama H."/>
            <person name="Satoh N."/>
            <person name="Takami S."/>
            <person name="Terashima Y."/>
            <person name="Suzuki O."/>
            <person name="Nakagawa S."/>
            <person name="Senoh A."/>
            <person name="Mizoguchi H."/>
            <person name="Goto Y."/>
            <person name="Shimizu F."/>
            <person name="Wakebe H."/>
            <person name="Hishigaki H."/>
            <person name="Watanabe T."/>
            <person name="Sugiyama A."/>
            <person name="Takemoto M."/>
            <person name="Kawakami B."/>
            <person name="Yamazaki M."/>
            <person name="Watanabe K."/>
            <person name="Kumagai A."/>
            <person name="Itakura S."/>
            <person name="Fukuzumi Y."/>
            <person name="Fujimori Y."/>
            <person name="Komiyama M."/>
            <person name="Tashiro H."/>
            <person name="Tanigami A."/>
            <person name="Fujiwara T."/>
            <person name="Ono T."/>
            <person name="Yamada K."/>
            <person name="Fujii Y."/>
            <person name="Ozaki K."/>
            <person name="Hirao M."/>
            <person name="Ohmori Y."/>
            <person name="Kawabata A."/>
            <person name="Hikiji T."/>
            <person name="Kobatake N."/>
            <person name="Inagaki H."/>
            <person name="Ikema Y."/>
            <person name="Okamoto S."/>
            <person name="Okitani R."/>
            <person name="Kawakami T."/>
            <person name="Noguchi S."/>
            <person name="Itoh T."/>
            <person name="Shigeta K."/>
            <person name="Senba T."/>
            <person name="Matsumura K."/>
            <person name="Nakajima Y."/>
            <person name="Mizuno T."/>
            <person name="Morinaga M."/>
            <person name="Sasaki M."/>
            <person name="Togashi T."/>
            <person name="Oyama M."/>
            <person name="Hata H."/>
            <person name="Watanabe M."/>
            <person name="Komatsu T."/>
            <person name="Mizushima-Sugano J."/>
            <person name="Satoh T."/>
            <person name="Shirai Y."/>
            <person name="Takahashi Y."/>
            <person name="Nakagawa K."/>
            <person name="Okumura K."/>
            <person name="Nagase T."/>
            <person name="Nomura N."/>
            <person name="Kikuchi H."/>
            <person name="Masuho Y."/>
            <person name="Yamashita R."/>
            <person name="Nakai K."/>
            <person name="Yada T."/>
            <person name="Nakamura Y."/>
            <person name="Ohara O."/>
            <person name="Isogai T."/>
            <person name="Sugano S."/>
        </authorList>
    </citation>
    <scope>NUCLEOTIDE SEQUENCE [LARGE SCALE MRNA]</scope>
    <scope>VARIANT ALA-65</scope>
</reference>
<reference key="4">
    <citation type="journal article" date="2003" name="Nature">
        <title>The DNA sequence and analysis of human chromosome 6.</title>
        <authorList>
            <person name="Mungall A.J."/>
            <person name="Palmer S.A."/>
            <person name="Sims S.K."/>
            <person name="Edwards C.A."/>
            <person name="Ashurst J.L."/>
            <person name="Wilming L."/>
            <person name="Jones M.C."/>
            <person name="Horton R."/>
            <person name="Hunt S.E."/>
            <person name="Scott C.E."/>
            <person name="Gilbert J.G.R."/>
            <person name="Clamp M.E."/>
            <person name="Bethel G."/>
            <person name="Milne S."/>
            <person name="Ainscough R."/>
            <person name="Almeida J.P."/>
            <person name="Ambrose K.D."/>
            <person name="Andrews T.D."/>
            <person name="Ashwell R.I.S."/>
            <person name="Babbage A.K."/>
            <person name="Bagguley C.L."/>
            <person name="Bailey J."/>
            <person name="Banerjee R."/>
            <person name="Barker D.J."/>
            <person name="Barlow K.F."/>
            <person name="Bates K."/>
            <person name="Beare D.M."/>
            <person name="Beasley H."/>
            <person name="Beasley O."/>
            <person name="Bird C.P."/>
            <person name="Blakey S.E."/>
            <person name="Bray-Allen S."/>
            <person name="Brook J."/>
            <person name="Brown A.J."/>
            <person name="Brown J.Y."/>
            <person name="Burford D.C."/>
            <person name="Burrill W."/>
            <person name="Burton J."/>
            <person name="Carder C."/>
            <person name="Carter N.P."/>
            <person name="Chapman J.C."/>
            <person name="Clark S.Y."/>
            <person name="Clark G."/>
            <person name="Clee C.M."/>
            <person name="Clegg S."/>
            <person name="Cobley V."/>
            <person name="Collier R.E."/>
            <person name="Collins J.E."/>
            <person name="Colman L.K."/>
            <person name="Corby N.R."/>
            <person name="Coville G.J."/>
            <person name="Culley K.M."/>
            <person name="Dhami P."/>
            <person name="Davies J."/>
            <person name="Dunn M."/>
            <person name="Earthrowl M.E."/>
            <person name="Ellington A.E."/>
            <person name="Evans K.A."/>
            <person name="Faulkner L."/>
            <person name="Francis M.D."/>
            <person name="Frankish A."/>
            <person name="Frankland J."/>
            <person name="French L."/>
            <person name="Garner P."/>
            <person name="Garnett J."/>
            <person name="Ghori M.J."/>
            <person name="Gilby L.M."/>
            <person name="Gillson C.J."/>
            <person name="Glithero R.J."/>
            <person name="Grafham D.V."/>
            <person name="Grant M."/>
            <person name="Gribble S."/>
            <person name="Griffiths C."/>
            <person name="Griffiths M.N.D."/>
            <person name="Hall R."/>
            <person name="Halls K.S."/>
            <person name="Hammond S."/>
            <person name="Harley J.L."/>
            <person name="Hart E.A."/>
            <person name="Heath P.D."/>
            <person name="Heathcott R."/>
            <person name="Holmes S.J."/>
            <person name="Howden P.J."/>
            <person name="Howe K.L."/>
            <person name="Howell G.R."/>
            <person name="Huckle E."/>
            <person name="Humphray S.J."/>
            <person name="Humphries M.D."/>
            <person name="Hunt A.R."/>
            <person name="Johnson C.M."/>
            <person name="Joy A.A."/>
            <person name="Kay M."/>
            <person name="Keenan S.J."/>
            <person name="Kimberley A.M."/>
            <person name="King A."/>
            <person name="Laird G.K."/>
            <person name="Langford C."/>
            <person name="Lawlor S."/>
            <person name="Leongamornlert D.A."/>
            <person name="Leversha M."/>
            <person name="Lloyd C.R."/>
            <person name="Lloyd D.M."/>
            <person name="Loveland J.E."/>
            <person name="Lovell J."/>
            <person name="Martin S."/>
            <person name="Mashreghi-Mohammadi M."/>
            <person name="Maslen G.L."/>
            <person name="Matthews L."/>
            <person name="McCann O.T."/>
            <person name="McLaren S.J."/>
            <person name="McLay K."/>
            <person name="McMurray A."/>
            <person name="Moore M.J.F."/>
            <person name="Mullikin J.C."/>
            <person name="Niblett D."/>
            <person name="Nickerson T."/>
            <person name="Novik K.L."/>
            <person name="Oliver K."/>
            <person name="Overton-Larty E.K."/>
            <person name="Parker A."/>
            <person name="Patel R."/>
            <person name="Pearce A.V."/>
            <person name="Peck A.I."/>
            <person name="Phillimore B.J.C.T."/>
            <person name="Phillips S."/>
            <person name="Plumb R.W."/>
            <person name="Porter K.M."/>
            <person name="Ramsey Y."/>
            <person name="Ranby S.A."/>
            <person name="Rice C.M."/>
            <person name="Ross M.T."/>
            <person name="Searle S.M."/>
            <person name="Sehra H.K."/>
            <person name="Sheridan E."/>
            <person name="Skuce C.D."/>
            <person name="Smith S."/>
            <person name="Smith M."/>
            <person name="Spraggon L."/>
            <person name="Squares S.L."/>
            <person name="Steward C.A."/>
            <person name="Sycamore N."/>
            <person name="Tamlyn-Hall G."/>
            <person name="Tester J."/>
            <person name="Theaker A.J."/>
            <person name="Thomas D.W."/>
            <person name="Thorpe A."/>
            <person name="Tracey A."/>
            <person name="Tromans A."/>
            <person name="Tubby B."/>
            <person name="Wall M."/>
            <person name="Wallis J.M."/>
            <person name="West A.P."/>
            <person name="White S.S."/>
            <person name="Whitehead S.L."/>
            <person name="Whittaker H."/>
            <person name="Wild A."/>
            <person name="Willey D.J."/>
            <person name="Wilmer T.E."/>
            <person name="Wood J.M."/>
            <person name="Wray P.W."/>
            <person name="Wyatt J.C."/>
            <person name="Young L."/>
            <person name="Younger R.M."/>
            <person name="Bentley D.R."/>
            <person name="Coulson A."/>
            <person name="Durbin R.M."/>
            <person name="Hubbard T."/>
            <person name="Sulston J.E."/>
            <person name="Dunham I."/>
            <person name="Rogers J."/>
            <person name="Beck S."/>
        </authorList>
    </citation>
    <scope>NUCLEOTIDE SEQUENCE [LARGE SCALE GENOMIC DNA]</scope>
</reference>
<reference key="5">
    <citation type="journal article" date="2004" name="Genome Res.">
        <title>The status, quality, and expansion of the NIH full-length cDNA project: the Mammalian Gene Collection (MGC).</title>
        <authorList>
            <consortium name="The MGC Project Team"/>
        </authorList>
    </citation>
    <scope>NUCLEOTIDE SEQUENCE [LARGE SCALE MRNA]</scope>
    <scope>VARIANT ALA-65</scope>
    <source>
        <tissue>Eye</tissue>
        <tissue>Lung</tissue>
    </source>
</reference>
<reference key="6">
    <citation type="journal article" date="2002" name="J. Biol. Chem.">
        <title>Functional overlap between retinitis pigmentosa 2 protein and the tubulin-specific chaperone cofactor C.</title>
        <authorList>
            <person name="Bartolini F."/>
            <person name="Bhamidipati A."/>
            <person name="Thomas S."/>
            <person name="Schwahn U."/>
            <person name="Lewis S.A."/>
            <person name="Cowan N.J."/>
        </authorList>
    </citation>
    <scope>FUNCTION</scope>
    <scope>MUTAGENESIS OF ARG-262</scope>
</reference>
<reference key="7">
    <citation type="journal article" date="2002" name="Hum. Mol. Genet.">
        <title>Localization in the human retina of the X-linked retinitis pigmentosa protein RP2, its homologue cofactor C and the RP2 interacting protein Arl3.</title>
        <authorList>
            <person name="Grayson C."/>
            <person name="Bartolini F."/>
            <person name="Chapple J.P."/>
            <person name="Willison K.R."/>
            <person name="Bhamidipati A."/>
            <person name="Lewis S.A."/>
            <person name="Luthert P.J."/>
            <person name="Hardcastle A.J."/>
            <person name="Cowan N.J."/>
            <person name="Cheetham M.E."/>
        </authorList>
    </citation>
    <scope>SUBCELLULAR LOCATION</scope>
    <scope>TISSUE SPECIFICITY</scope>
</reference>
<reference key="8">
    <citation type="journal article" date="2008" name="Proc. Natl. Acad. Sci. U.S.A.">
        <title>A quantitative atlas of mitotic phosphorylation.</title>
        <authorList>
            <person name="Dephoure N."/>
            <person name="Zhou C."/>
            <person name="Villen J."/>
            <person name="Beausoleil S.A."/>
            <person name="Bakalarski C.E."/>
            <person name="Elledge S.J."/>
            <person name="Gygi S.P."/>
        </authorList>
    </citation>
    <scope>PHOSPHORYLATION [LARGE SCALE ANALYSIS] AT SER-168</scope>
    <scope>IDENTIFICATION BY MASS SPECTROMETRY [LARGE SCALE ANALYSIS]</scope>
    <source>
        <tissue>Cervix carcinoma</tissue>
    </source>
</reference>
<reference key="9">
    <citation type="journal article" date="2009" name="Anal. Chem.">
        <title>Lys-N and trypsin cover complementary parts of the phosphoproteome in a refined SCX-based approach.</title>
        <authorList>
            <person name="Gauci S."/>
            <person name="Helbig A.O."/>
            <person name="Slijper M."/>
            <person name="Krijgsveld J."/>
            <person name="Heck A.J."/>
            <person name="Mohammed S."/>
        </authorList>
    </citation>
    <scope>IDENTIFICATION BY MASS SPECTROMETRY [LARGE SCALE ANALYSIS]</scope>
</reference>
<reference key="10">
    <citation type="journal article" date="2010" name="Sci. Signal.">
        <title>Quantitative phosphoproteomics reveals widespread full phosphorylation site occupancy during mitosis.</title>
        <authorList>
            <person name="Olsen J.V."/>
            <person name="Vermeulen M."/>
            <person name="Santamaria A."/>
            <person name="Kumar C."/>
            <person name="Miller M.L."/>
            <person name="Jensen L.J."/>
            <person name="Gnad F."/>
            <person name="Cox J."/>
            <person name="Jensen T.S."/>
            <person name="Nigg E.A."/>
            <person name="Brunak S."/>
            <person name="Mann M."/>
        </authorList>
    </citation>
    <scope>PHOSPHORYLATION [LARGE SCALE ANALYSIS] AT SER-168</scope>
    <scope>IDENTIFICATION BY MASS SPECTROMETRY [LARGE SCALE ANALYSIS]</scope>
    <source>
        <tissue>Cervix carcinoma</tissue>
    </source>
</reference>
<reference key="11">
    <citation type="journal article" date="2011" name="BMC Syst. Biol.">
        <title>Initial characterization of the human central proteome.</title>
        <authorList>
            <person name="Burkard T.R."/>
            <person name="Planyavsky M."/>
            <person name="Kaupe I."/>
            <person name="Breitwieser F.P."/>
            <person name="Buerckstuemmer T."/>
            <person name="Bennett K.L."/>
            <person name="Superti-Furga G."/>
            <person name="Colinge J."/>
        </authorList>
    </citation>
    <scope>IDENTIFICATION BY MASS SPECTROMETRY [LARGE SCALE ANALYSIS]</scope>
</reference>
<reference key="12">
    <citation type="journal article" date="2012" name="Mol. Cell. Proteomics">
        <title>Comparative large-scale characterisation of plant vs. mammal proteins reveals similar and idiosyncratic N-alpha acetylation features.</title>
        <authorList>
            <person name="Bienvenut W.V."/>
            <person name="Sumpton D."/>
            <person name="Martinez A."/>
            <person name="Lilla S."/>
            <person name="Espagne C."/>
            <person name="Meinnel T."/>
            <person name="Giglione C."/>
        </authorList>
    </citation>
    <scope>ACETYLATION [LARGE SCALE ANALYSIS] AT MET-1</scope>
    <scope>IDENTIFICATION BY MASS SPECTROMETRY [LARGE SCALE ANALYSIS]</scope>
</reference>
<reference key="13">
    <citation type="journal article" date="2012" name="Proc. Natl. Acad. Sci. U.S.A.">
        <title>N-terminal acetylome analyses and functional insights of the N-terminal acetyltransferase NatB.</title>
        <authorList>
            <person name="Van Damme P."/>
            <person name="Lasa M."/>
            <person name="Polevoda B."/>
            <person name="Gazquez C."/>
            <person name="Elosegui-Artola A."/>
            <person name="Kim D.S."/>
            <person name="De Juan-Pardo E."/>
            <person name="Demeyer K."/>
            <person name="Hole K."/>
            <person name="Larrea E."/>
            <person name="Timmerman E."/>
            <person name="Prieto J."/>
            <person name="Arnesen T."/>
            <person name="Sherman F."/>
            <person name="Gevaert K."/>
            <person name="Aldabe R."/>
        </authorList>
    </citation>
    <scope>ACETYLATION [LARGE SCALE ANALYSIS] AT MET-1</scope>
    <scope>IDENTIFICATION BY MASS SPECTROMETRY [LARGE SCALE ANALYSIS]</scope>
</reference>
<reference key="14">
    <citation type="journal article" date="2013" name="J. Proteome Res.">
        <title>Toward a comprehensive characterization of a human cancer cell phosphoproteome.</title>
        <authorList>
            <person name="Zhou H."/>
            <person name="Di Palma S."/>
            <person name="Preisinger C."/>
            <person name="Peng M."/>
            <person name="Polat A.N."/>
            <person name="Heck A.J."/>
            <person name="Mohammed S."/>
        </authorList>
    </citation>
    <scope>PHOSPHORYLATION [LARGE SCALE ANALYSIS] AT SER-80 AND SER-168</scope>
    <scope>IDENTIFICATION BY MASS SPECTROMETRY [LARGE SCALE ANALYSIS]</scope>
    <source>
        <tissue>Cervix carcinoma</tissue>
        <tissue>Erythroleukemia</tissue>
    </source>
</reference>
<reference key="15">
    <citation type="submission" date="2008-04" db="PDB data bank">
        <title>Solution structure of the C-terminal region in human tubulin folding cofactor C.</title>
        <authorList>
            <consortium name="RIKEN structural genomics initiative (RSGI)"/>
        </authorList>
    </citation>
    <scope>STRUCTURE BY NMR OF 181-346</scope>
</reference>
<reference key="16">
    <citation type="journal article" date="2011" name="Am. J. Hum. Genet.">
        <title>Recessive mutations in ELOVL4 cause ichthyosis, intellectual disability, and spastic quadriplegia.</title>
        <authorList>
            <person name="Aldahmesh M.A."/>
            <person name="Mohamed J.Y."/>
            <person name="Alkuraya H.S."/>
            <person name="Verma I.C."/>
            <person name="Puri R.D."/>
            <person name="Alaiya A.A."/>
            <person name="Rizzo W.B."/>
            <person name="Alkuraya F.S."/>
        </authorList>
    </citation>
    <scope>VARIANT ASP-86</scope>
</reference>
<accession>Q15814</accession>
<accession>Q53Y43</accession>
<accession>Q5T787</accession>
<dbReference type="EMBL" id="U61234">
    <property type="protein sequence ID" value="AAB17539.1"/>
    <property type="molecule type" value="mRNA"/>
</dbReference>
<dbReference type="EMBL" id="BT007002">
    <property type="protein sequence ID" value="AAP35648.1"/>
    <property type="molecule type" value="mRNA"/>
</dbReference>
<dbReference type="EMBL" id="AK312681">
    <property type="protein sequence ID" value="BAG35561.1"/>
    <property type="molecule type" value="mRNA"/>
</dbReference>
<dbReference type="EMBL" id="AL353716">
    <property type="status" value="NOT_ANNOTATED_CDS"/>
    <property type="molecule type" value="Genomic_DNA"/>
</dbReference>
<dbReference type="EMBL" id="BC017479">
    <property type="protein sequence ID" value="AAH17479.1"/>
    <property type="molecule type" value="mRNA"/>
</dbReference>
<dbReference type="EMBL" id="BC020170">
    <property type="protein sequence ID" value="AAH20170.1"/>
    <property type="molecule type" value="mRNA"/>
</dbReference>
<dbReference type="CCDS" id="CCDS4872.1"/>
<dbReference type="RefSeq" id="NP_003183.2">
    <property type="nucleotide sequence ID" value="NM_003192.3"/>
</dbReference>
<dbReference type="PDB" id="2L3L">
    <property type="method" value="NMR"/>
    <property type="chains" value="A=26-135"/>
</dbReference>
<dbReference type="PDB" id="2YUH">
    <property type="method" value="NMR"/>
    <property type="chains" value="A=181-346"/>
</dbReference>
<dbReference type="PDBsum" id="2L3L"/>
<dbReference type="PDBsum" id="2YUH"/>
<dbReference type="BMRB" id="Q15814"/>
<dbReference type="SMR" id="Q15814"/>
<dbReference type="BioGRID" id="112766">
    <property type="interactions" value="13"/>
</dbReference>
<dbReference type="DIP" id="DIP-46388N"/>
<dbReference type="FunCoup" id="Q15814">
    <property type="interactions" value="1667"/>
</dbReference>
<dbReference type="IntAct" id="Q15814">
    <property type="interactions" value="10"/>
</dbReference>
<dbReference type="STRING" id="9606.ENSP00000361967"/>
<dbReference type="GlyGen" id="Q15814">
    <property type="glycosylation" value="1 site, 1 O-linked glycan (1 site)"/>
</dbReference>
<dbReference type="iPTMnet" id="Q15814"/>
<dbReference type="PhosphoSitePlus" id="Q15814"/>
<dbReference type="SwissPalm" id="Q15814"/>
<dbReference type="BioMuta" id="TBCC"/>
<dbReference type="DMDM" id="313104020"/>
<dbReference type="jPOST" id="Q15814"/>
<dbReference type="MassIVE" id="Q15814"/>
<dbReference type="PaxDb" id="9606-ENSP00000361967"/>
<dbReference type="PeptideAtlas" id="Q15814"/>
<dbReference type="ProteomicsDB" id="60773"/>
<dbReference type="Pumba" id="Q15814"/>
<dbReference type="Antibodypedia" id="30171">
    <property type="antibodies" value="349 antibodies from 27 providers"/>
</dbReference>
<dbReference type="DNASU" id="6903"/>
<dbReference type="Ensembl" id="ENST00000372876.2">
    <property type="protein sequence ID" value="ENSP00000361967.1"/>
    <property type="gene ID" value="ENSG00000124659.7"/>
</dbReference>
<dbReference type="GeneID" id="6903"/>
<dbReference type="KEGG" id="hsa:6903"/>
<dbReference type="MANE-Select" id="ENST00000372876.2">
    <property type="protein sequence ID" value="ENSP00000361967.1"/>
    <property type="RefSeq nucleotide sequence ID" value="NM_003192.3"/>
    <property type="RefSeq protein sequence ID" value="NP_003183.2"/>
</dbReference>
<dbReference type="UCSC" id="uc003osl.4">
    <property type="organism name" value="human"/>
</dbReference>
<dbReference type="AGR" id="HGNC:11580"/>
<dbReference type="CTD" id="6903"/>
<dbReference type="DisGeNET" id="6903"/>
<dbReference type="GeneCards" id="TBCC"/>
<dbReference type="HGNC" id="HGNC:11580">
    <property type="gene designation" value="TBCC"/>
</dbReference>
<dbReference type="HPA" id="ENSG00000124659">
    <property type="expression patterns" value="Low tissue specificity"/>
</dbReference>
<dbReference type="MIM" id="602971">
    <property type="type" value="gene"/>
</dbReference>
<dbReference type="neXtProt" id="NX_Q15814"/>
<dbReference type="OpenTargets" id="ENSG00000124659"/>
<dbReference type="PharmGKB" id="PA36344"/>
<dbReference type="VEuPathDB" id="HostDB:ENSG00000124659"/>
<dbReference type="eggNOG" id="KOG2512">
    <property type="taxonomic scope" value="Eukaryota"/>
</dbReference>
<dbReference type="GeneTree" id="ENSGT00940000162058"/>
<dbReference type="HOGENOM" id="CLU_032612_2_1_1"/>
<dbReference type="InParanoid" id="Q15814"/>
<dbReference type="OMA" id="YFQHEIT"/>
<dbReference type="OrthoDB" id="194775at2759"/>
<dbReference type="PAN-GO" id="Q15814">
    <property type="GO annotations" value="3 GO annotations based on evolutionary models"/>
</dbReference>
<dbReference type="PhylomeDB" id="Q15814"/>
<dbReference type="TreeFam" id="TF105832"/>
<dbReference type="PathwayCommons" id="Q15814"/>
<dbReference type="Reactome" id="R-HSA-389977">
    <property type="pathway name" value="Post-chaperonin tubulin folding pathway"/>
</dbReference>
<dbReference type="SignaLink" id="Q15814"/>
<dbReference type="BioGRID-ORCS" id="6903">
    <property type="hits" value="594 hits in 1124 CRISPR screens"/>
</dbReference>
<dbReference type="CD-CODE" id="8C2F96ED">
    <property type="entry name" value="Centrosome"/>
</dbReference>
<dbReference type="ChiTaRS" id="TBCC">
    <property type="organism name" value="human"/>
</dbReference>
<dbReference type="EvolutionaryTrace" id="Q15814"/>
<dbReference type="GenomeRNAi" id="6903"/>
<dbReference type="Pharos" id="Q15814">
    <property type="development level" value="Tbio"/>
</dbReference>
<dbReference type="PRO" id="PR:Q15814"/>
<dbReference type="Proteomes" id="UP000005640">
    <property type="component" value="Chromosome 6"/>
</dbReference>
<dbReference type="RNAct" id="Q15814">
    <property type="molecule type" value="protein"/>
</dbReference>
<dbReference type="Bgee" id="ENSG00000124659">
    <property type="expression patterns" value="Expressed in oocyte and 184 other cell types or tissues"/>
</dbReference>
<dbReference type="GO" id="GO:0005737">
    <property type="term" value="C:cytoplasm"/>
    <property type="evidence" value="ECO:0000314"/>
    <property type="project" value="UniProtKB"/>
</dbReference>
<dbReference type="GO" id="GO:0005856">
    <property type="term" value="C:cytoskeleton"/>
    <property type="evidence" value="ECO:0000304"/>
    <property type="project" value="ProtInc"/>
</dbReference>
<dbReference type="GO" id="GO:0005829">
    <property type="term" value="C:cytosol"/>
    <property type="evidence" value="ECO:0000314"/>
    <property type="project" value="HPA"/>
</dbReference>
<dbReference type="GO" id="GO:0005783">
    <property type="term" value="C:endoplasmic reticulum"/>
    <property type="evidence" value="ECO:0000314"/>
    <property type="project" value="HPA"/>
</dbReference>
<dbReference type="GO" id="GO:0005874">
    <property type="term" value="C:microtubule"/>
    <property type="evidence" value="ECO:0000304"/>
    <property type="project" value="ProtInc"/>
</dbReference>
<dbReference type="GO" id="GO:0032391">
    <property type="term" value="C:photoreceptor connecting cilium"/>
    <property type="evidence" value="ECO:0000314"/>
    <property type="project" value="UniProtKB"/>
</dbReference>
<dbReference type="GO" id="GO:0003924">
    <property type="term" value="F:GTPase activity"/>
    <property type="evidence" value="ECO:0000314"/>
    <property type="project" value="UniProtKB"/>
</dbReference>
<dbReference type="GO" id="GO:0051087">
    <property type="term" value="F:protein-folding chaperone binding"/>
    <property type="evidence" value="ECO:0000304"/>
    <property type="project" value="ProtInc"/>
</dbReference>
<dbReference type="GO" id="GO:0015631">
    <property type="term" value="F:tubulin binding"/>
    <property type="evidence" value="ECO:0007669"/>
    <property type="project" value="InterPro"/>
</dbReference>
<dbReference type="GO" id="GO:0007023">
    <property type="term" value="P:post-chaperonin tubulin folding pathway"/>
    <property type="evidence" value="ECO:0000314"/>
    <property type="project" value="UniProtKB"/>
</dbReference>
<dbReference type="GO" id="GO:0006457">
    <property type="term" value="P:protein folding"/>
    <property type="evidence" value="ECO:0000318"/>
    <property type="project" value="GO_Central"/>
</dbReference>
<dbReference type="GO" id="GO:0007021">
    <property type="term" value="P:tubulin complex assembly"/>
    <property type="evidence" value="ECO:0000318"/>
    <property type="project" value="GO_Central"/>
</dbReference>
<dbReference type="FunFam" id="1.20.58.1250:FF:000001">
    <property type="entry name" value="Tubulin-specific chaperone C"/>
    <property type="match status" value="1"/>
</dbReference>
<dbReference type="FunFam" id="2.160.20.70:FF:000007">
    <property type="entry name" value="tubulin-specific chaperone C"/>
    <property type="match status" value="1"/>
</dbReference>
<dbReference type="Gene3D" id="2.160.20.70">
    <property type="match status" value="1"/>
</dbReference>
<dbReference type="Gene3D" id="1.20.58.1250">
    <property type="entry name" value="Tubulin Binding Cofactor C, N-terminal domain"/>
    <property type="match status" value="1"/>
</dbReference>
<dbReference type="InterPro" id="IPR017901">
    <property type="entry name" value="C-CAP_CF_C-like"/>
</dbReference>
<dbReference type="InterPro" id="IPR016098">
    <property type="entry name" value="CAP/MinC_C"/>
</dbReference>
<dbReference type="InterPro" id="IPR006599">
    <property type="entry name" value="CARP_motif"/>
</dbReference>
<dbReference type="InterPro" id="IPR027684">
    <property type="entry name" value="TBCC"/>
</dbReference>
<dbReference type="InterPro" id="IPR031925">
    <property type="entry name" value="TBCC_N"/>
</dbReference>
<dbReference type="InterPro" id="IPR038397">
    <property type="entry name" value="TBCC_N_sf"/>
</dbReference>
<dbReference type="InterPro" id="IPR012945">
    <property type="entry name" value="Tubulin-bd_cofactor_C_dom"/>
</dbReference>
<dbReference type="PANTHER" id="PTHR15139">
    <property type="entry name" value="TUBULIN FOLDING COFACTOR C"/>
    <property type="match status" value="1"/>
</dbReference>
<dbReference type="PANTHER" id="PTHR15139:SF0">
    <property type="entry name" value="TUBULIN-SPECIFIC CHAPERONE C"/>
    <property type="match status" value="1"/>
</dbReference>
<dbReference type="Pfam" id="PF07986">
    <property type="entry name" value="TBCC"/>
    <property type="match status" value="1"/>
</dbReference>
<dbReference type="Pfam" id="PF16752">
    <property type="entry name" value="TBCC_N"/>
    <property type="match status" value="1"/>
</dbReference>
<dbReference type="SMART" id="SM00673">
    <property type="entry name" value="CARP"/>
    <property type="match status" value="2"/>
</dbReference>
<dbReference type="PROSITE" id="PS51329">
    <property type="entry name" value="C_CAP_COFACTOR_C"/>
    <property type="match status" value="1"/>
</dbReference>
<gene>
    <name type="primary">TBCC</name>
</gene>
<protein>
    <recommendedName>
        <fullName>Tubulin-specific chaperone C</fullName>
    </recommendedName>
    <alternativeName>
        <fullName>Tubulin-folding cofactor C</fullName>
        <shortName>CFC</shortName>
    </alternativeName>
</protein>
<keyword id="KW-0002">3D-structure</keyword>
<keyword id="KW-0007">Acetylation</keyword>
<keyword id="KW-0143">Chaperone</keyword>
<keyword id="KW-0963">Cytoplasm</keyword>
<keyword id="KW-0597">Phosphoprotein</keyword>
<keyword id="KW-1267">Proteomics identification</keyword>
<keyword id="KW-1185">Reference proteome</keyword>
<name>TBCC_HUMAN</name>
<comment type="function">
    <text evidence="3">Tubulin-folding protein; involved in the final step of the tubulin folding pathway.</text>
</comment>
<comment type="subunit">
    <text>Supercomplex made of cofactors A to E. Cofactors A and D function by capturing and stabilizing tubulin in a quasi-native conformation. Cofactor E binds to the cofactor D-tubulin complex; interaction with cofactor C then causes the release of tubulin polypeptides that are committed to the native state.</text>
</comment>
<comment type="interaction">
    <interactant intactId="EBI-15695297">
        <id>Q15814</id>
    </interactant>
    <interactant intactId="EBI-25837549">
        <id>P28329-3</id>
        <label>CHAT</label>
    </interactant>
    <organismsDiffer>false</organismsDiffer>
    <experiments>3</experiments>
</comment>
<comment type="interaction">
    <interactant intactId="EBI-15695297">
        <id>Q15814</id>
    </interactant>
    <interactant intactId="EBI-348399">
        <id>P22607</id>
        <label>FGFR3</label>
    </interactant>
    <organismsDiffer>false</organismsDiffer>
    <experiments>3</experiments>
</comment>
<comment type="interaction">
    <interactant intactId="EBI-15695297">
        <id>Q15814</id>
    </interactant>
    <interactant intactId="EBI-351506">
        <id>P06396</id>
        <label>GSN</label>
    </interactant>
    <organismsDiffer>false</organismsDiffer>
    <experiments>3</experiments>
</comment>
<comment type="subcellular location">
    <subcellularLocation>
        <location evidence="4">Cytoplasm</location>
    </subcellularLocation>
    <text>Detected predominantly in the photoreceptor connecting cilium.</text>
</comment>
<comment type="tissue specificity">
    <text evidence="4">Expressed in the retina. Expressed in the rod and cone photoreceptors, extending from the inner segments (IS), through the outer nuclear layer (ONL) and into the synapses in the outer plexiform layer (OPL). Strongly expressed to the photoreceptor connecting cilium at the tips of the IS (at protein level).</text>
</comment>
<comment type="similarity">
    <text evidence="10">Belongs to the TBCC family.</text>
</comment>
<sequence length="346" mass="39248">MESVSCSAAAVRTGDMESQRDLSLVPERLQRREQERQLEVERRKQKRQNQEVEKENSHFFVATFVRERAAVEELLERAESVERLEEAASRLQGLQKLINDSVFFLAAYDLRQGQEALARLQAALAERRRGLQPKKRFAFKTRGKDAASSTKVDAAPGIPPAVESIQDSPLPKKAEGDLGPSWVCGFSNLESQVLEKRASELHQRDVLLTELSNCTVRLYGNPNTLRLTKAHSCKLLCGPVSTSVFLEDCSDCVLAVACQQLRIHSTKDTRIFLQVTSRAIVEDCSGIQFAPYTWSYPEIDKDFESSGLDRSKNNWNDVDDFNWLARDMASPNWSILPEEERNIQWD</sequence>
<evidence type="ECO:0000255" key="1">
    <source>
        <dbReference type="PROSITE-ProRule" id="PRU00659"/>
    </source>
</evidence>
<evidence type="ECO:0000256" key="2">
    <source>
        <dbReference type="SAM" id="MobiDB-lite"/>
    </source>
</evidence>
<evidence type="ECO:0000269" key="3">
    <source>
    </source>
</evidence>
<evidence type="ECO:0000269" key="4">
    <source>
    </source>
</evidence>
<evidence type="ECO:0000269" key="5">
    <source>
    </source>
</evidence>
<evidence type="ECO:0000269" key="6">
    <source>
    </source>
</evidence>
<evidence type="ECO:0000269" key="7">
    <source>
    </source>
</evidence>
<evidence type="ECO:0000269" key="8">
    <source>
    </source>
</evidence>
<evidence type="ECO:0000269" key="9">
    <source ref="2"/>
</evidence>
<evidence type="ECO:0000305" key="10"/>
<evidence type="ECO:0007744" key="11">
    <source>
    </source>
</evidence>
<evidence type="ECO:0007744" key="12">
    <source>
    </source>
</evidence>
<evidence type="ECO:0007744" key="13">
    <source>
    </source>
</evidence>
<evidence type="ECO:0007744" key="14">
    <source>
    </source>
</evidence>
<evidence type="ECO:0007744" key="15">
    <source>
    </source>
</evidence>
<evidence type="ECO:0007829" key="16">
    <source>
        <dbReference type="PDB" id="2L3L"/>
    </source>
</evidence>
<evidence type="ECO:0007829" key="17">
    <source>
        <dbReference type="PDB" id="2YUH"/>
    </source>
</evidence>
<proteinExistence type="evidence at protein level"/>
<organism>
    <name type="scientific">Homo sapiens</name>
    <name type="common">Human</name>
    <dbReference type="NCBI Taxonomy" id="9606"/>
    <lineage>
        <taxon>Eukaryota</taxon>
        <taxon>Metazoa</taxon>
        <taxon>Chordata</taxon>
        <taxon>Craniata</taxon>
        <taxon>Vertebrata</taxon>
        <taxon>Euteleostomi</taxon>
        <taxon>Mammalia</taxon>
        <taxon>Eutheria</taxon>
        <taxon>Euarchontoglires</taxon>
        <taxon>Primates</taxon>
        <taxon>Haplorrhini</taxon>
        <taxon>Catarrhini</taxon>
        <taxon>Hominidae</taxon>
        <taxon>Homo</taxon>
    </lineage>
</organism>
<feature type="chain" id="PRO_0000080046" description="Tubulin-specific chaperone C">
    <location>
        <begin position="1"/>
        <end position="346"/>
    </location>
</feature>
<feature type="domain" description="C-CAP/cofactor C-like" evidence="1">
    <location>
        <begin position="171"/>
        <end position="323"/>
    </location>
</feature>
<feature type="region of interest" description="Disordered" evidence="2">
    <location>
        <begin position="1"/>
        <end position="26"/>
    </location>
</feature>
<feature type="region of interest" description="Disordered" evidence="2">
    <location>
        <begin position="140"/>
        <end position="171"/>
    </location>
</feature>
<feature type="modified residue" description="N-acetylmethionine" evidence="13 14">
    <location>
        <position position="1"/>
    </location>
</feature>
<feature type="modified residue" description="Phosphoserine" evidence="15">
    <location>
        <position position="80"/>
    </location>
</feature>
<feature type="modified residue" description="Phosphoserine" evidence="11 12 15">
    <location>
        <position position="168"/>
    </location>
</feature>
<feature type="sequence variant" id="VAR_026822" description="In dbSNP:rs2234026." evidence="5 6 8 9">
    <original>V</original>
    <variation>A</variation>
    <location>
        <position position="65"/>
    </location>
</feature>
<feature type="sequence variant" id="VAR_067423" description="In dbSNP:rs144361927." evidence="7">
    <original>E</original>
    <variation>D</variation>
    <location>
        <position position="86"/>
    </location>
</feature>
<feature type="sequence variant" id="VAR_026823" description="In dbSNP:rs7742995.">
    <original>G</original>
    <variation>D</variation>
    <location>
        <position position="157"/>
    </location>
</feature>
<feature type="sequence variant" id="VAR_020448" description="In dbSNP:rs2234027.">
    <original>P</original>
    <variation>S</variation>
    <location>
        <position position="169"/>
    </location>
</feature>
<feature type="sequence variant" id="VAR_024653" description="In dbSNP:rs2234028.">
    <original>P</original>
    <variation>S</variation>
    <location>
        <position position="180"/>
    </location>
</feature>
<feature type="sequence variant" id="VAR_026824" description="In dbSNP:rs12175072.">
    <original>A</original>
    <variation>T</variation>
    <location>
        <position position="279"/>
    </location>
</feature>
<feature type="mutagenesis site" description="Inhibits stimulation of tubulin GTPase activity." evidence="3">
    <original>R</original>
    <variation>A</variation>
    <location>
        <position position="262"/>
    </location>
</feature>
<feature type="helix" evidence="16">
    <location>
        <begin position="32"/>
        <end position="37"/>
    </location>
</feature>
<feature type="helix" evidence="16">
    <location>
        <begin position="40"/>
        <end position="43"/>
    </location>
</feature>
<feature type="helix" evidence="16">
    <location>
        <begin position="49"/>
        <end position="55"/>
    </location>
</feature>
<feature type="helix" evidence="16">
    <location>
        <begin position="56"/>
        <end position="77"/>
    </location>
</feature>
<feature type="helix" evidence="16">
    <location>
        <begin position="81"/>
        <end position="100"/>
    </location>
</feature>
<feature type="turn" evidence="16">
    <location>
        <begin position="102"/>
        <end position="104"/>
    </location>
</feature>
<feature type="helix" evidence="16">
    <location>
        <begin position="107"/>
        <end position="131"/>
    </location>
</feature>
<feature type="strand" evidence="17">
    <location>
        <begin position="183"/>
        <end position="185"/>
    </location>
</feature>
<feature type="strand" evidence="17">
    <location>
        <begin position="193"/>
        <end position="196"/>
    </location>
</feature>
<feature type="helix" evidence="17">
    <location>
        <begin position="198"/>
        <end position="201"/>
    </location>
</feature>
<feature type="strand" evidence="17">
    <location>
        <begin position="205"/>
        <end position="208"/>
    </location>
</feature>
<feature type="strand" evidence="17">
    <location>
        <begin position="215"/>
        <end position="218"/>
    </location>
</feature>
<feature type="strand" evidence="17">
    <location>
        <begin position="225"/>
        <end position="229"/>
    </location>
</feature>
<feature type="strand" evidence="17">
    <location>
        <begin position="234"/>
        <end position="236"/>
    </location>
</feature>
<feature type="strand" evidence="17">
    <location>
        <begin position="244"/>
        <end position="248"/>
    </location>
</feature>
<feature type="strand" evidence="17">
    <location>
        <begin position="253"/>
        <end position="255"/>
    </location>
</feature>
<feature type="strand" evidence="17">
    <location>
        <begin position="259"/>
        <end position="265"/>
    </location>
</feature>
<feature type="strand" evidence="17">
    <location>
        <begin position="270"/>
        <end position="272"/>
    </location>
</feature>
<feature type="strand" evidence="17">
    <location>
        <begin position="276"/>
        <end position="283"/>
    </location>
</feature>
<feature type="strand" evidence="17">
    <location>
        <begin position="285"/>
        <end position="290"/>
    </location>
</feature>
<feature type="helix" evidence="17">
    <location>
        <begin position="300"/>
        <end position="306"/>
    </location>
</feature>
<feature type="strand" evidence="17">
    <location>
        <begin position="338"/>
        <end position="340"/>
    </location>
</feature>